<accession>Q9V2G3</accession>
<accession>G8ZFU6</accession>
<name>RFCL_PYRAB</name>
<protein>
    <recommendedName>
        <fullName>Replication factor C large subunit</fullName>
        <shortName>RFC large subunit</shortName>
    </recommendedName>
    <alternativeName>
        <fullName>Clamp loader large subunit</fullName>
    </alternativeName>
    <alternativeName>
        <fullName>PabRFC large subunit</fullName>
    </alternativeName>
</protein>
<feature type="initiator methionine" description="Removed" evidence="3">
    <location>
        <position position="1"/>
    </location>
</feature>
<feature type="chain" id="PRO_0000135960" description="Replication factor C large subunit">
    <location>
        <begin position="2"/>
        <end position="479"/>
    </location>
</feature>
<feature type="region of interest" description="Disordered" evidence="2">
    <location>
        <begin position="420"/>
        <end position="479"/>
    </location>
</feature>
<feature type="compositionally biased region" description="Basic and acidic residues" evidence="2">
    <location>
        <begin position="420"/>
        <end position="468"/>
    </location>
</feature>
<feature type="binding site" evidence="1">
    <location>
        <begin position="50"/>
        <end position="57"/>
    </location>
    <ligand>
        <name>ATP</name>
        <dbReference type="ChEBI" id="CHEBI:30616"/>
    </ligand>
</feature>
<dbReference type="EMBL" id="AJ248283">
    <property type="protein sequence ID" value="CAB49035.1"/>
    <property type="molecule type" value="Genomic_DNA"/>
</dbReference>
<dbReference type="EMBL" id="HE613800">
    <property type="protein sequence ID" value="CCE69487.1"/>
    <property type="molecule type" value="Genomic_DNA"/>
</dbReference>
<dbReference type="PIR" id="D75198">
    <property type="entry name" value="D75198"/>
</dbReference>
<dbReference type="RefSeq" id="WP_010867235.1">
    <property type="nucleotide sequence ID" value="NC_000868.1"/>
</dbReference>
<dbReference type="SMR" id="Q9V2G3"/>
<dbReference type="IntAct" id="Q9V2G3">
    <property type="interactions" value="1"/>
</dbReference>
<dbReference type="MINT" id="Q9V2G3"/>
<dbReference type="STRING" id="272844.PAB0069"/>
<dbReference type="KEGG" id="pab:PAB0069"/>
<dbReference type="PATRIC" id="fig|272844.11.peg.124"/>
<dbReference type="eggNOG" id="arCOG00470">
    <property type="taxonomic scope" value="Archaea"/>
</dbReference>
<dbReference type="HOGENOM" id="CLU_027255_1_1_2"/>
<dbReference type="OrthoDB" id="8658at2157"/>
<dbReference type="PhylomeDB" id="Q9V2G3"/>
<dbReference type="Proteomes" id="UP000000810">
    <property type="component" value="Chromosome"/>
</dbReference>
<dbReference type="Proteomes" id="UP000009139">
    <property type="component" value="Chromosome"/>
</dbReference>
<dbReference type="GO" id="GO:0005524">
    <property type="term" value="F:ATP binding"/>
    <property type="evidence" value="ECO:0007669"/>
    <property type="project" value="UniProtKB-UniRule"/>
</dbReference>
<dbReference type="GO" id="GO:0016887">
    <property type="term" value="F:ATP hydrolysis activity"/>
    <property type="evidence" value="ECO:0007669"/>
    <property type="project" value="InterPro"/>
</dbReference>
<dbReference type="GO" id="GO:0003689">
    <property type="term" value="F:DNA clamp loader activity"/>
    <property type="evidence" value="ECO:0007669"/>
    <property type="project" value="UniProtKB-UniRule"/>
</dbReference>
<dbReference type="GO" id="GO:0006260">
    <property type="term" value="P:DNA replication"/>
    <property type="evidence" value="ECO:0007669"/>
    <property type="project" value="UniProtKB-UniRule"/>
</dbReference>
<dbReference type="CDD" id="cd00009">
    <property type="entry name" value="AAA"/>
    <property type="match status" value="1"/>
</dbReference>
<dbReference type="CDD" id="cd18140">
    <property type="entry name" value="HLD_clamp_RFC"/>
    <property type="match status" value="1"/>
</dbReference>
<dbReference type="Gene3D" id="1.10.8.60">
    <property type="match status" value="1"/>
</dbReference>
<dbReference type="Gene3D" id="3.40.50.300">
    <property type="entry name" value="P-loop containing nucleotide triphosphate hydrolases"/>
    <property type="match status" value="1"/>
</dbReference>
<dbReference type="HAMAP" id="MF_01508">
    <property type="entry name" value="RfcL"/>
    <property type="match status" value="1"/>
</dbReference>
<dbReference type="InterPro" id="IPR003593">
    <property type="entry name" value="AAA+_ATPase"/>
</dbReference>
<dbReference type="InterPro" id="IPR003959">
    <property type="entry name" value="ATPase_AAA_core"/>
</dbReference>
<dbReference type="InterPro" id="IPR027417">
    <property type="entry name" value="P-loop_NTPase"/>
</dbReference>
<dbReference type="InterPro" id="IPR023935">
    <property type="entry name" value="Rep_factor-C_lsu"/>
</dbReference>
<dbReference type="InterPro" id="IPR047854">
    <property type="entry name" value="RFC_lid"/>
</dbReference>
<dbReference type="NCBIfam" id="NF003227">
    <property type="entry name" value="PRK04195.1-2"/>
    <property type="match status" value="1"/>
</dbReference>
<dbReference type="NCBIfam" id="NF003229">
    <property type="entry name" value="PRK04195.1-5"/>
    <property type="match status" value="1"/>
</dbReference>
<dbReference type="PANTHER" id="PTHR23389">
    <property type="entry name" value="CHROMOSOME TRANSMISSION FIDELITY FACTOR 18"/>
    <property type="match status" value="1"/>
</dbReference>
<dbReference type="PANTHER" id="PTHR23389:SF6">
    <property type="entry name" value="REPLICATION FACTOR C SUBUNIT 1"/>
    <property type="match status" value="1"/>
</dbReference>
<dbReference type="Pfam" id="PF00004">
    <property type="entry name" value="AAA"/>
    <property type="match status" value="1"/>
</dbReference>
<dbReference type="Pfam" id="PF21960">
    <property type="entry name" value="RCF1-5-like_lid"/>
    <property type="match status" value="1"/>
</dbReference>
<dbReference type="SMART" id="SM00382">
    <property type="entry name" value="AAA"/>
    <property type="match status" value="1"/>
</dbReference>
<dbReference type="SUPFAM" id="SSF52540">
    <property type="entry name" value="P-loop containing nucleoside triphosphate hydrolases"/>
    <property type="match status" value="1"/>
</dbReference>
<gene>
    <name type="primary">rfcL</name>
    <name type="ordered locus">PYRAB01110</name>
    <name type="ORF">PAB0069</name>
</gene>
<reference key="1">
    <citation type="journal article" date="2003" name="Mol. Microbiol.">
        <title>An integrated analysis of the genome of the hyperthermophilic archaeon Pyrococcus abyssi.</title>
        <authorList>
            <person name="Cohen G.N."/>
            <person name="Barbe V."/>
            <person name="Flament D."/>
            <person name="Galperin M."/>
            <person name="Heilig R."/>
            <person name="Lecompte O."/>
            <person name="Poch O."/>
            <person name="Prieur D."/>
            <person name="Querellou J."/>
            <person name="Ripp R."/>
            <person name="Thierry J.-C."/>
            <person name="Van der Oost J."/>
            <person name="Weissenbach J."/>
            <person name="Zivanovic Y."/>
            <person name="Forterre P."/>
        </authorList>
    </citation>
    <scope>NUCLEOTIDE SEQUENCE [LARGE SCALE GENOMIC DNA]</scope>
    <source>
        <strain>GE5 / Orsay</strain>
    </source>
</reference>
<reference key="2">
    <citation type="journal article" date="2012" name="Curr. Microbiol.">
        <title>Re-annotation of two hyperthermophilic archaea Pyrococcus abyssi GE5 and Pyrococcus furiosus DSM 3638.</title>
        <authorList>
            <person name="Gao J."/>
            <person name="Wang J."/>
        </authorList>
    </citation>
    <scope>GENOME REANNOTATION</scope>
    <source>
        <strain>GE5 / Orsay</strain>
    </source>
</reference>
<reference key="3">
    <citation type="journal article" date="2002" name="J. Mol. Biol.">
        <title>Replication factor C from the hyperthermophilic archaeon Pyrococcus abyssi does not need ATP hydrolysis for clamp-loading and contains a functionally conserved RFC PCNA-binding domain.</title>
        <authorList>
            <person name="Henneke G."/>
            <person name="Gueguen Y."/>
            <person name="Flament D."/>
            <person name="Azam P."/>
            <person name="Querellou J."/>
            <person name="Dietrich J."/>
            <person name="Huebscher U."/>
            <person name="Raffin J.-P."/>
        </authorList>
    </citation>
    <scope>PROTEIN SEQUENCE OF 2-12</scope>
    <scope>FUNCTION</scope>
    <scope>SUBUNIT</scope>
    <source>
        <strain>GE5 / Orsay</strain>
    </source>
</reference>
<evidence type="ECO:0000255" key="1"/>
<evidence type="ECO:0000256" key="2">
    <source>
        <dbReference type="SAM" id="MobiDB-lite"/>
    </source>
</evidence>
<evidence type="ECO:0000269" key="3">
    <source>
    </source>
</evidence>
<evidence type="ECO:0000305" key="4"/>
<evidence type="ECO:0000305" key="5">
    <source>
    </source>
</evidence>
<keyword id="KW-0067">ATP-binding</keyword>
<keyword id="KW-0903">Direct protein sequencing</keyword>
<keyword id="KW-0235">DNA replication</keyword>
<keyword id="KW-0547">Nucleotide-binding</keyword>
<proteinExistence type="evidence at protein level"/>
<organism>
    <name type="scientific">Pyrococcus abyssi (strain GE5 / Orsay)</name>
    <dbReference type="NCBI Taxonomy" id="272844"/>
    <lineage>
        <taxon>Archaea</taxon>
        <taxon>Methanobacteriati</taxon>
        <taxon>Methanobacteriota</taxon>
        <taxon>Thermococci</taxon>
        <taxon>Thermococcales</taxon>
        <taxon>Thermococcaceae</taxon>
        <taxon>Pyrococcus</taxon>
    </lineage>
</organism>
<comment type="function">
    <text evidence="3">Part of the RFC clamp loader complex which loads the PCNA sliding clamp onto DNA. The complex possesses DNA-independent ATPase activity.</text>
</comment>
<comment type="subunit">
    <text evidence="5">Heterohexamer composed of four small subunits (RfcS) and two large subunits (RfcL).</text>
</comment>
<comment type="similarity">
    <text evidence="4">Belongs to the activator 1 small subunits family. RfcL subfamily.</text>
</comment>
<sequence>MPEVPWVEKYRPRRLSEIINQEDAISKVKAWIEAWLHGNPPKKKALLLAGPPGSGKTTTVYALAREYNFEVIELNASDERTYDKIARYVQAAYTMDILGKRRKIIFLDEADNIEPSGAPEIAKLIDRARNPIIMAANHYWEVPKEIRDRAELVEYKRLTQRDVINALVRILKREGITVPKEVLVEIAKRASGDLRAAINDLQTVVAGGYEDARYVLAYRDVEKTVFQALGLVFASDNAKRAKLAMMNLDMSPDEFLLWIDENIPHMYLKPEEMARAYEAISKADIYLGRAQRTGNYSLWRYAIDMMTAGVAVAGTKKRGFAKFYPPNTLKMLAESKEERSTRNSIIKKIMSEMHMSKLEAIETMKIIKTIFEKNLDLAAHFTVFLGLSEKEVEFLAGRENAGTIWGKALAIRRKLKKEEEKIRKERKEEEKVEVREEKPEEKVEEKREERETKKEKEKKEEKKAEKKGKQVTLFDFIKK</sequence>